<sequence length="199" mass="24196">MQIKPFEENKPYPEWDPDEPDKVPGIPNWNRNFGNIIIEFDKGTRTCYYHRKKKNKYDVECGDYRIKITYSQKNWNKKVVYDNDAWKWLVDCLDPTEINKFLCHLCKILDMNIDKDVYDYLINNVNFSVNNNDLRALLYYFWHRAIIEDRIYSQKKGYNGRKQVIGATYEVLKELRNNQNRVYLYEKCDEIYKMAKKKL</sequence>
<dbReference type="EMBL" id="L77117">
    <property type="protein sequence ID" value="AAB98597.1"/>
    <property type="molecule type" value="Genomic_DNA"/>
</dbReference>
<dbReference type="PIR" id="G64374">
    <property type="entry name" value="G64374"/>
</dbReference>
<dbReference type="RefSeq" id="WP_010870103.1">
    <property type="nucleotide sequence ID" value="NC_000909.1"/>
</dbReference>
<dbReference type="STRING" id="243232.MJ_0599"/>
<dbReference type="PaxDb" id="243232-MJ_0599"/>
<dbReference type="EnsemblBacteria" id="AAB98597">
    <property type="protein sequence ID" value="AAB98597"/>
    <property type="gene ID" value="MJ_0599"/>
</dbReference>
<dbReference type="GeneID" id="1451464"/>
<dbReference type="KEGG" id="mja:MJ_0599"/>
<dbReference type="HOGENOM" id="CLU_1369535_0_0_2"/>
<dbReference type="InParanoid" id="Q58016"/>
<dbReference type="Proteomes" id="UP000000805">
    <property type="component" value="Chromosome"/>
</dbReference>
<reference key="1">
    <citation type="journal article" date="1996" name="Science">
        <title>Complete genome sequence of the methanogenic archaeon, Methanococcus jannaschii.</title>
        <authorList>
            <person name="Bult C.J."/>
            <person name="White O."/>
            <person name="Olsen G.J."/>
            <person name="Zhou L."/>
            <person name="Fleischmann R.D."/>
            <person name="Sutton G.G."/>
            <person name="Blake J.A."/>
            <person name="FitzGerald L.M."/>
            <person name="Clayton R.A."/>
            <person name="Gocayne J.D."/>
            <person name="Kerlavage A.R."/>
            <person name="Dougherty B.A."/>
            <person name="Tomb J.-F."/>
            <person name="Adams M.D."/>
            <person name="Reich C.I."/>
            <person name="Overbeek R."/>
            <person name="Kirkness E.F."/>
            <person name="Weinstock K.G."/>
            <person name="Merrick J.M."/>
            <person name="Glodek A."/>
            <person name="Scott J.L."/>
            <person name="Geoghagen N.S.M."/>
            <person name="Weidman J.F."/>
            <person name="Fuhrmann J.L."/>
            <person name="Nguyen D."/>
            <person name="Utterback T.R."/>
            <person name="Kelley J.M."/>
            <person name="Peterson J.D."/>
            <person name="Sadow P.W."/>
            <person name="Hanna M.C."/>
            <person name="Cotton M.D."/>
            <person name="Roberts K.M."/>
            <person name="Hurst M.A."/>
            <person name="Kaine B.P."/>
            <person name="Borodovsky M."/>
            <person name="Klenk H.-P."/>
            <person name="Fraser C.M."/>
            <person name="Smith H.O."/>
            <person name="Woese C.R."/>
            <person name="Venter J.C."/>
        </authorList>
    </citation>
    <scope>NUCLEOTIDE SEQUENCE [LARGE SCALE GENOMIC DNA]</scope>
    <source>
        <strain>ATCC 43067 / DSM 2661 / JAL-1 / JCM 10045 / NBRC 100440</strain>
    </source>
</reference>
<organism>
    <name type="scientific">Methanocaldococcus jannaschii (strain ATCC 43067 / DSM 2661 / JAL-1 / JCM 10045 / NBRC 100440)</name>
    <name type="common">Methanococcus jannaschii</name>
    <dbReference type="NCBI Taxonomy" id="243232"/>
    <lineage>
        <taxon>Archaea</taxon>
        <taxon>Methanobacteriati</taxon>
        <taxon>Methanobacteriota</taxon>
        <taxon>Methanomada group</taxon>
        <taxon>Methanococci</taxon>
        <taxon>Methanococcales</taxon>
        <taxon>Methanocaldococcaceae</taxon>
        <taxon>Methanocaldococcus</taxon>
    </lineage>
</organism>
<proteinExistence type="predicted"/>
<accession>Q58016</accession>
<feature type="chain" id="PRO_0000106951" description="Uncharacterized protein MJ0599">
    <location>
        <begin position="1"/>
        <end position="199"/>
    </location>
</feature>
<keyword id="KW-1185">Reference proteome</keyword>
<gene>
    <name type="ordered locus">MJ0599</name>
</gene>
<name>Y599_METJA</name>
<protein>
    <recommendedName>
        <fullName>Uncharacterized protein MJ0599</fullName>
    </recommendedName>
</protein>